<protein>
    <recommendedName>
        <fullName evidence="5">ES1 protein, mitochondrial</fullName>
    </recommendedName>
</protein>
<feature type="transit peptide" description="Mitochondrion" evidence="1">
    <location>
        <begin position="1"/>
        <end status="unknown"/>
    </location>
</feature>
<feature type="chain" id="PRO_0000008546" description="ES1 protein, mitochondrial">
    <location>
        <begin status="unknown"/>
        <end position="270"/>
    </location>
</feature>
<feature type="sequence conflict" description="In Ref. 1; AAC60261." evidence="5" ref="1">
    <original>M</original>
    <variation>I</variation>
    <location>
        <position position="98"/>
    </location>
</feature>
<sequence>MLASRALLAKQAAAMLVRQPACLMHHGGDWGNWGNTNIAVVFSGCGWWDGTDIHEAAYTMYHLSRNGARFQIFAPNQQQMHVMDHMKMQPSSSDNRNMMMESARFSHGQGMMQMNDLSKLDANSFDAVIFPGGHGIVKNMSTFSKDGKDCKLNNDVERVLKDFHRARKPIGLSSMAPLLACRVLPSLEVTMGYERDESSRWGRWPNTNMVQAVKSMGARHNTREPYEAYVDEKNKVISTPTFMWETDYHYHYIFDGIGNMVKHVMRMTAK</sequence>
<name>ES1_DANRE</name>
<dbReference type="EMBL" id="U10403">
    <property type="protein sequence ID" value="AAC60261.1"/>
    <property type="molecule type" value="mRNA"/>
</dbReference>
<dbReference type="EMBL" id="BX323451">
    <property type="protein sequence ID" value="CAQ13297.1"/>
    <property type="molecule type" value="Genomic_DNA"/>
</dbReference>
<dbReference type="EMBL" id="FP015956">
    <property type="status" value="NOT_ANNOTATED_CDS"/>
    <property type="molecule type" value="Genomic_DNA"/>
</dbReference>
<dbReference type="EMBL" id="FP017299">
    <property type="status" value="NOT_ANNOTATED_CDS"/>
    <property type="molecule type" value="Genomic_DNA"/>
</dbReference>
<dbReference type="EMBL" id="BC122433">
    <property type="protein sequence ID" value="AAI22434.1"/>
    <property type="molecule type" value="mRNA"/>
</dbReference>
<dbReference type="PIR" id="JC5603">
    <property type="entry name" value="JC5603"/>
</dbReference>
<dbReference type="RefSeq" id="NP_571114.1">
    <property type="nucleotide sequence ID" value="NM_131039.1"/>
</dbReference>
<dbReference type="SMR" id="Q90257"/>
<dbReference type="STRING" id="7955.ENSDARP00000112917"/>
<dbReference type="PaxDb" id="7955-ENSDARP00000112917"/>
<dbReference type="Ensembl" id="ENSDART00000146667">
    <property type="protein sequence ID" value="ENSDARP00000112917"/>
    <property type="gene ID" value="ENSDARG00000094516"/>
</dbReference>
<dbReference type="GeneID" id="30237"/>
<dbReference type="KEGG" id="dre:30237"/>
<dbReference type="AGR" id="ZFIN:ZDB-GENE-980526-188"/>
<dbReference type="CTD" id="30237"/>
<dbReference type="ZFIN" id="ZDB-GENE-980526-188">
    <property type="gene designation" value="gatd3l"/>
</dbReference>
<dbReference type="eggNOG" id="ENOG502QV3Z">
    <property type="taxonomic scope" value="Eukaryota"/>
</dbReference>
<dbReference type="HOGENOM" id="CLU_072952_0_0_1"/>
<dbReference type="InParanoid" id="Q90257"/>
<dbReference type="OMA" id="HGDYGNW"/>
<dbReference type="OrthoDB" id="543156at2759"/>
<dbReference type="PhylomeDB" id="Q90257"/>
<dbReference type="TreeFam" id="TF329408"/>
<dbReference type="PRO" id="PR:Q90257"/>
<dbReference type="Proteomes" id="UP000000437">
    <property type="component" value="Chromosome 8"/>
</dbReference>
<dbReference type="Bgee" id="ENSDARG00000094516">
    <property type="expression patterns" value="Expressed in eye photoreceptor cell and 2 other cell types or tissues"/>
</dbReference>
<dbReference type="GO" id="GO:0005739">
    <property type="term" value="C:mitochondrion"/>
    <property type="evidence" value="ECO:0000314"/>
    <property type="project" value="UniProtKB"/>
</dbReference>
<dbReference type="GO" id="GO:0007005">
    <property type="term" value="P:mitochondrion organization"/>
    <property type="evidence" value="ECO:0000315"/>
    <property type="project" value="ZFIN"/>
</dbReference>
<dbReference type="FunFam" id="3.40.50.880:FF:000062">
    <property type="entry name" value="ES1 protein, mitochondrial"/>
    <property type="match status" value="1"/>
</dbReference>
<dbReference type="Gene3D" id="3.40.50.880">
    <property type="match status" value="1"/>
</dbReference>
<dbReference type="InterPro" id="IPR029062">
    <property type="entry name" value="Class_I_gatase-like"/>
</dbReference>
<dbReference type="NCBIfam" id="NF008747">
    <property type="entry name" value="PRK11780.1"/>
    <property type="match status" value="1"/>
</dbReference>
<dbReference type="PANTHER" id="PTHR10224">
    <property type="entry name" value="ES1 PROTEIN HOMOLOG, MITOCHONDRIAL"/>
    <property type="match status" value="1"/>
</dbReference>
<dbReference type="PANTHER" id="PTHR10224:SF15">
    <property type="entry name" value="ES1 PROTEIN, MITOCHONDRIAL"/>
    <property type="match status" value="1"/>
</dbReference>
<dbReference type="SUPFAM" id="SSF52317">
    <property type="entry name" value="Class I glutamine amidotransferase-like"/>
    <property type="match status" value="1"/>
</dbReference>
<organism>
    <name type="scientific">Danio rerio</name>
    <name type="common">Zebrafish</name>
    <name type="synonym">Brachydanio rerio</name>
    <dbReference type="NCBI Taxonomy" id="7955"/>
    <lineage>
        <taxon>Eukaryota</taxon>
        <taxon>Metazoa</taxon>
        <taxon>Chordata</taxon>
        <taxon>Craniata</taxon>
        <taxon>Vertebrata</taxon>
        <taxon>Euteleostomi</taxon>
        <taxon>Actinopterygii</taxon>
        <taxon>Neopterygii</taxon>
        <taxon>Teleostei</taxon>
        <taxon>Ostariophysi</taxon>
        <taxon>Cypriniformes</taxon>
        <taxon>Danionidae</taxon>
        <taxon>Danioninae</taxon>
        <taxon>Danio</taxon>
    </lineage>
</organism>
<gene>
    <name evidence="4" type="primary">es1</name>
</gene>
<keyword id="KW-0903">Direct protein sequencing</keyword>
<keyword id="KW-0496">Mitochondrion</keyword>
<keyword id="KW-1185">Reference proteome</keyword>
<keyword id="KW-0809">Transit peptide</keyword>
<reference key="1">
    <citation type="journal article" date="1997" name="Biochem. Biophys. Res. Commun.">
        <title>A novel zebrafish gene expressed specifically in the photoreceptor cells of the retina.</title>
        <authorList>
            <person name="Chang H."/>
            <person name="Gilbert W."/>
        </authorList>
    </citation>
    <scope>NUCLEOTIDE SEQUENCE [MRNA]</scope>
    <scope>PROTEIN SEQUENCE OF 105-137</scope>
    <scope>TISSUE SPECIFICITY</scope>
    <source>
        <tissue>Eye</tissue>
    </source>
</reference>
<reference key="2">
    <citation type="journal article" date="2013" name="Nature">
        <title>The zebrafish reference genome sequence and its relationship to the human genome.</title>
        <authorList>
            <person name="Howe K."/>
            <person name="Clark M.D."/>
            <person name="Torroja C.F."/>
            <person name="Torrance J."/>
            <person name="Berthelot C."/>
            <person name="Muffato M."/>
            <person name="Collins J.E."/>
            <person name="Humphray S."/>
            <person name="McLaren K."/>
            <person name="Matthews L."/>
            <person name="McLaren S."/>
            <person name="Sealy I."/>
            <person name="Caccamo M."/>
            <person name="Churcher C."/>
            <person name="Scott C."/>
            <person name="Barrett J.C."/>
            <person name="Koch R."/>
            <person name="Rauch G.J."/>
            <person name="White S."/>
            <person name="Chow W."/>
            <person name="Kilian B."/>
            <person name="Quintais L.T."/>
            <person name="Guerra-Assuncao J.A."/>
            <person name="Zhou Y."/>
            <person name="Gu Y."/>
            <person name="Yen J."/>
            <person name="Vogel J.H."/>
            <person name="Eyre T."/>
            <person name="Redmond S."/>
            <person name="Banerjee R."/>
            <person name="Chi J."/>
            <person name="Fu B."/>
            <person name="Langley E."/>
            <person name="Maguire S.F."/>
            <person name="Laird G.K."/>
            <person name="Lloyd D."/>
            <person name="Kenyon E."/>
            <person name="Donaldson S."/>
            <person name="Sehra H."/>
            <person name="Almeida-King J."/>
            <person name="Loveland J."/>
            <person name="Trevanion S."/>
            <person name="Jones M."/>
            <person name="Quail M."/>
            <person name="Willey D."/>
            <person name="Hunt A."/>
            <person name="Burton J."/>
            <person name="Sims S."/>
            <person name="McLay K."/>
            <person name="Plumb B."/>
            <person name="Davis J."/>
            <person name="Clee C."/>
            <person name="Oliver K."/>
            <person name="Clark R."/>
            <person name="Riddle C."/>
            <person name="Elliot D."/>
            <person name="Threadgold G."/>
            <person name="Harden G."/>
            <person name="Ware D."/>
            <person name="Begum S."/>
            <person name="Mortimore B."/>
            <person name="Kerry G."/>
            <person name="Heath P."/>
            <person name="Phillimore B."/>
            <person name="Tracey A."/>
            <person name="Corby N."/>
            <person name="Dunn M."/>
            <person name="Johnson C."/>
            <person name="Wood J."/>
            <person name="Clark S."/>
            <person name="Pelan S."/>
            <person name="Griffiths G."/>
            <person name="Smith M."/>
            <person name="Glithero R."/>
            <person name="Howden P."/>
            <person name="Barker N."/>
            <person name="Lloyd C."/>
            <person name="Stevens C."/>
            <person name="Harley J."/>
            <person name="Holt K."/>
            <person name="Panagiotidis G."/>
            <person name="Lovell J."/>
            <person name="Beasley H."/>
            <person name="Henderson C."/>
            <person name="Gordon D."/>
            <person name="Auger K."/>
            <person name="Wright D."/>
            <person name="Collins J."/>
            <person name="Raisen C."/>
            <person name="Dyer L."/>
            <person name="Leung K."/>
            <person name="Robertson L."/>
            <person name="Ambridge K."/>
            <person name="Leongamornlert D."/>
            <person name="McGuire S."/>
            <person name="Gilderthorp R."/>
            <person name="Griffiths C."/>
            <person name="Manthravadi D."/>
            <person name="Nichol S."/>
            <person name="Barker G."/>
            <person name="Whitehead S."/>
            <person name="Kay M."/>
            <person name="Brown J."/>
            <person name="Murnane C."/>
            <person name="Gray E."/>
            <person name="Humphries M."/>
            <person name="Sycamore N."/>
            <person name="Barker D."/>
            <person name="Saunders D."/>
            <person name="Wallis J."/>
            <person name="Babbage A."/>
            <person name="Hammond S."/>
            <person name="Mashreghi-Mohammadi M."/>
            <person name="Barr L."/>
            <person name="Martin S."/>
            <person name="Wray P."/>
            <person name="Ellington A."/>
            <person name="Matthews N."/>
            <person name="Ellwood M."/>
            <person name="Woodmansey R."/>
            <person name="Clark G."/>
            <person name="Cooper J."/>
            <person name="Tromans A."/>
            <person name="Grafham D."/>
            <person name="Skuce C."/>
            <person name="Pandian R."/>
            <person name="Andrews R."/>
            <person name="Harrison E."/>
            <person name="Kimberley A."/>
            <person name="Garnett J."/>
            <person name="Fosker N."/>
            <person name="Hall R."/>
            <person name="Garner P."/>
            <person name="Kelly D."/>
            <person name="Bird C."/>
            <person name="Palmer S."/>
            <person name="Gehring I."/>
            <person name="Berger A."/>
            <person name="Dooley C.M."/>
            <person name="Ersan-Urun Z."/>
            <person name="Eser C."/>
            <person name="Geiger H."/>
            <person name="Geisler M."/>
            <person name="Karotki L."/>
            <person name="Kirn A."/>
            <person name="Konantz J."/>
            <person name="Konantz M."/>
            <person name="Oberlander M."/>
            <person name="Rudolph-Geiger S."/>
            <person name="Teucke M."/>
            <person name="Lanz C."/>
            <person name="Raddatz G."/>
            <person name="Osoegawa K."/>
            <person name="Zhu B."/>
            <person name="Rapp A."/>
            <person name="Widaa S."/>
            <person name="Langford C."/>
            <person name="Yang F."/>
            <person name="Schuster S.C."/>
            <person name="Carter N.P."/>
            <person name="Harrow J."/>
            <person name="Ning Z."/>
            <person name="Herrero J."/>
            <person name="Searle S.M."/>
            <person name="Enright A."/>
            <person name="Geisler R."/>
            <person name="Plasterk R.H."/>
            <person name="Lee C."/>
            <person name="Westerfield M."/>
            <person name="de Jong P.J."/>
            <person name="Zon L.I."/>
            <person name="Postlethwait J.H."/>
            <person name="Nusslein-Volhard C."/>
            <person name="Hubbard T.J."/>
            <person name="Roest Crollius H."/>
            <person name="Rogers J."/>
            <person name="Stemple D.L."/>
        </authorList>
    </citation>
    <scope>NUCLEOTIDE SEQUENCE [LARGE SCALE GENOMIC DNA]</scope>
    <source>
        <strain>Tuebingen</strain>
    </source>
</reference>
<reference key="3">
    <citation type="submission" date="2006-08" db="EMBL/GenBank/DDBJ databases">
        <authorList>
            <consortium name="NIH - Zebrafish Gene Collection (ZGC) project"/>
        </authorList>
    </citation>
    <scope>NUCLEOTIDE SEQUENCE [LARGE SCALE MRNA]</scope>
</reference>
<reference key="4">
    <citation type="journal article" date="2016" name="Sci. Rep.">
        <title>ES1 is a mitochondrial enlarging factor contributing to form mega-mitochondria in zebrafish cones.</title>
        <authorList>
            <person name="Masuda T."/>
            <person name="Wada Y."/>
            <person name="Kawamura S."/>
        </authorList>
    </citation>
    <scope>FUNCTION</scope>
    <scope>SUBCELLULAR LOCATION</scope>
    <scope>TISSUE SPECIFICITY</scope>
    <scope>DISRUPTION PHENOTYPE</scope>
</reference>
<evidence type="ECO:0000255" key="1"/>
<evidence type="ECO:0000269" key="2">
    <source>
    </source>
</evidence>
<evidence type="ECO:0000269" key="3">
    <source>
    </source>
</evidence>
<evidence type="ECO:0000303" key="4">
    <source>
    </source>
</evidence>
<evidence type="ECO:0000305" key="5"/>
<comment type="function">
    <text evidence="2">Plays a role in promoting mitochondrial enlargement in cone photoreceptor cells in a fusion-independent and ATP-dependent manner.</text>
</comment>
<comment type="subcellular location">
    <subcellularLocation>
        <location evidence="2">Mitochondrion</location>
    </subcellularLocation>
    <text evidence="2">Colocalized with tom20 in cone mitochondria. Uniformly distributed throughout all mitochondria in cone ellipsoids including mega-mitochondria.</text>
</comment>
<comment type="tissue specificity">
    <text evidence="2 3">Expressed specifically in the inner segments of cone photoreceptor cells of the retina (at protein level).</text>
</comment>
<comment type="disruption phenotype">
    <text evidence="2">Morpholino knockdown of the protein display decreased eye size and formation of smaller mitochondria in cone ellipsoid photoreceptor cells.</text>
</comment>
<accession>Q90257</accession>
<accession>Q0D274</accession>
<proteinExistence type="evidence at protein level"/>